<dbReference type="EMBL" id="AK039106">
    <property type="protein sequence ID" value="BAC30240.1"/>
    <property type="status" value="ALT_FRAME"/>
    <property type="molecule type" value="mRNA"/>
</dbReference>
<dbReference type="EMBL" id="AK080933">
    <property type="protein sequence ID" value="BAC38084.1"/>
    <property type="molecule type" value="mRNA"/>
</dbReference>
<dbReference type="EMBL" id="AK136071">
    <property type="protein sequence ID" value="BAE22806.1"/>
    <property type="molecule type" value="mRNA"/>
</dbReference>
<dbReference type="EMBL" id="AK148216">
    <property type="protein sequence ID" value="BAE28418.1"/>
    <property type="molecule type" value="mRNA"/>
</dbReference>
<dbReference type="EMBL" id="AK154040">
    <property type="protein sequence ID" value="BAE32332.1"/>
    <property type="molecule type" value="mRNA"/>
</dbReference>
<dbReference type="EMBL" id="AL596204">
    <property type="status" value="NOT_ANNOTATED_CDS"/>
    <property type="molecule type" value="Genomic_DNA"/>
</dbReference>
<dbReference type="EMBL" id="BC025820">
    <property type="protein sequence ID" value="AAH25820.1"/>
    <property type="molecule type" value="mRNA"/>
</dbReference>
<dbReference type="CCDS" id="CCDS24777.1"/>
<dbReference type="RefSeq" id="NP_001258285.1">
    <property type="nucleotide sequence ID" value="NM_001271356.1"/>
</dbReference>
<dbReference type="RefSeq" id="NP_001258286.1">
    <property type="nucleotide sequence ID" value="NM_001271357.1"/>
</dbReference>
<dbReference type="RefSeq" id="NP_666130.1">
    <property type="nucleotide sequence ID" value="NM_146018.2"/>
</dbReference>
<dbReference type="RefSeq" id="XP_011247207.1">
    <property type="nucleotide sequence ID" value="XM_011248905.4"/>
</dbReference>
<dbReference type="RefSeq" id="XP_036012443.1">
    <property type="nucleotide sequence ID" value="XM_036156550.1"/>
</dbReference>
<dbReference type="SMR" id="Q8QZS3"/>
<dbReference type="FunCoup" id="Q8QZS3">
    <property type="interactions" value="2888"/>
</dbReference>
<dbReference type="IntAct" id="Q8QZS3">
    <property type="interactions" value="1"/>
</dbReference>
<dbReference type="STRING" id="10090.ENSMUSP00000099758"/>
<dbReference type="iPTMnet" id="Q8QZS3"/>
<dbReference type="PhosphoSitePlus" id="Q8QZS3"/>
<dbReference type="SwissPalm" id="Q8QZS3"/>
<dbReference type="jPOST" id="Q8QZS3"/>
<dbReference type="PaxDb" id="10090-ENSMUSP00000099758"/>
<dbReference type="PeptideAtlas" id="Q8QZS3"/>
<dbReference type="ProteomicsDB" id="267593"/>
<dbReference type="Pumba" id="Q8QZS3"/>
<dbReference type="DNASU" id="216805"/>
<dbReference type="Ensembl" id="ENSMUST00000091246.11">
    <property type="protein sequence ID" value="ENSMUSP00000091696.4"/>
    <property type="gene ID" value="ENSMUSG00000032633.13"/>
</dbReference>
<dbReference type="Ensembl" id="ENSMUST00000102697.10">
    <property type="protein sequence ID" value="ENSMUSP00000099758.4"/>
    <property type="gene ID" value="ENSMUSG00000032633.13"/>
</dbReference>
<dbReference type="GeneID" id="216805"/>
<dbReference type="KEGG" id="mmu:216805"/>
<dbReference type="UCSC" id="uc007jew.2">
    <property type="organism name" value="mouse"/>
</dbReference>
<dbReference type="AGR" id="MGI:2442184"/>
<dbReference type="CTD" id="201163"/>
<dbReference type="MGI" id="MGI:2442184">
    <property type="gene designation" value="Flcn"/>
</dbReference>
<dbReference type="VEuPathDB" id="HostDB:ENSMUSG00000032633"/>
<dbReference type="eggNOG" id="KOG3715">
    <property type="taxonomic scope" value="Eukaryota"/>
</dbReference>
<dbReference type="GeneTree" id="ENSGT00390000009864"/>
<dbReference type="HOGENOM" id="CLU_035854_2_0_1"/>
<dbReference type="InParanoid" id="Q8QZS3"/>
<dbReference type="OMA" id="LWASLHC"/>
<dbReference type="OrthoDB" id="5599713at2759"/>
<dbReference type="PhylomeDB" id="Q8QZS3"/>
<dbReference type="TreeFam" id="TF315084"/>
<dbReference type="Reactome" id="R-MMU-9639288">
    <property type="pathway name" value="Amino acids regulate mTORC1"/>
</dbReference>
<dbReference type="BioGRID-ORCS" id="216805">
    <property type="hits" value="25 hits in 80 CRISPR screens"/>
</dbReference>
<dbReference type="ChiTaRS" id="Flcn">
    <property type="organism name" value="mouse"/>
</dbReference>
<dbReference type="PRO" id="PR:Q8QZS3"/>
<dbReference type="Proteomes" id="UP000000589">
    <property type="component" value="Chromosome 11"/>
</dbReference>
<dbReference type="RNAct" id="Q8QZS3">
    <property type="molecule type" value="protein"/>
</dbReference>
<dbReference type="Bgee" id="ENSMUSG00000032633">
    <property type="expression patterns" value="Expressed in submandibular gland and 259 other cell types or tissues"/>
</dbReference>
<dbReference type="ExpressionAtlas" id="Q8QZS3">
    <property type="expression patterns" value="baseline and differential"/>
</dbReference>
<dbReference type="GO" id="GO:0044291">
    <property type="term" value="C:cell-cell contact zone"/>
    <property type="evidence" value="ECO:0007669"/>
    <property type="project" value="Ensembl"/>
</dbReference>
<dbReference type="GO" id="GO:0005813">
    <property type="term" value="C:centrosome"/>
    <property type="evidence" value="ECO:0000250"/>
    <property type="project" value="UniProtKB"/>
</dbReference>
<dbReference type="GO" id="GO:0005929">
    <property type="term" value="C:cilium"/>
    <property type="evidence" value="ECO:0000250"/>
    <property type="project" value="UniProtKB"/>
</dbReference>
<dbReference type="GO" id="GO:0005737">
    <property type="term" value="C:cytoplasm"/>
    <property type="evidence" value="ECO:0000250"/>
    <property type="project" value="UniProtKB"/>
</dbReference>
<dbReference type="GO" id="GO:0005829">
    <property type="term" value="C:cytosol"/>
    <property type="evidence" value="ECO:0000250"/>
    <property type="project" value="UniProtKB"/>
</dbReference>
<dbReference type="GO" id="GO:1990877">
    <property type="term" value="C:FNIP-folliculin RagC/D GAP"/>
    <property type="evidence" value="ECO:0000250"/>
    <property type="project" value="UniProtKB"/>
</dbReference>
<dbReference type="GO" id="GO:0005765">
    <property type="term" value="C:lysosomal membrane"/>
    <property type="evidence" value="ECO:0000250"/>
    <property type="project" value="UniProtKB"/>
</dbReference>
<dbReference type="GO" id="GO:0030496">
    <property type="term" value="C:midbody"/>
    <property type="evidence" value="ECO:0007669"/>
    <property type="project" value="Ensembl"/>
</dbReference>
<dbReference type="GO" id="GO:0072686">
    <property type="term" value="C:mitotic spindle"/>
    <property type="evidence" value="ECO:0000250"/>
    <property type="project" value="UniProtKB"/>
</dbReference>
<dbReference type="GO" id="GO:0005634">
    <property type="term" value="C:nucleus"/>
    <property type="evidence" value="ECO:0000250"/>
    <property type="project" value="UniProtKB"/>
</dbReference>
<dbReference type="GO" id="GO:0005886">
    <property type="term" value="C:plasma membrane"/>
    <property type="evidence" value="ECO:0000250"/>
    <property type="project" value="UniProtKB"/>
</dbReference>
<dbReference type="GO" id="GO:0019899">
    <property type="term" value="F:enzyme binding"/>
    <property type="evidence" value="ECO:0007669"/>
    <property type="project" value="Ensembl"/>
</dbReference>
<dbReference type="GO" id="GO:0004857">
    <property type="term" value="F:enzyme inhibitor activity"/>
    <property type="evidence" value="ECO:0007669"/>
    <property type="project" value="Ensembl"/>
</dbReference>
<dbReference type="GO" id="GO:0005096">
    <property type="term" value="F:GTPase activator activity"/>
    <property type="evidence" value="ECO:0000250"/>
    <property type="project" value="UniProtKB"/>
</dbReference>
<dbReference type="GO" id="GO:0044877">
    <property type="term" value="F:protein-containing complex binding"/>
    <property type="evidence" value="ECO:0000250"/>
    <property type="project" value="UniProtKB"/>
</dbReference>
<dbReference type="GO" id="GO:0072111">
    <property type="term" value="P:cell proliferation involved in kidney development"/>
    <property type="evidence" value="ECO:0000315"/>
    <property type="project" value="MGI"/>
</dbReference>
<dbReference type="GO" id="GO:0007043">
    <property type="term" value="P:cell-cell junction assembly"/>
    <property type="evidence" value="ECO:0000315"/>
    <property type="project" value="UniProtKB"/>
</dbReference>
<dbReference type="GO" id="GO:0034198">
    <property type="term" value="P:cellular response to amino acid starvation"/>
    <property type="evidence" value="ECO:0000250"/>
    <property type="project" value="UniProtKB"/>
</dbReference>
<dbReference type="GO" id="GO:0009267">
    <property type="term" value="P:cellular response to starvation"/>
    <property type="evidence" value="ECO:0000250"/>
    <property type="project" value="UniProtKB"/>
</dbReference>
<dbReference type="GO" id="GO:0097009">
    <property type="term" value="P:energy homeostasis"/>
    <property type="evidence" value="ECO:0000315"/>
    <property type="project" value="UniProtKB"/>
</dbReference>
<dbReference type="GO" id="GO:0050673">
    <property type="term" value="P:epithelial cell proliferation"/>
    <property type="evidence" value="ECO:0000315"/>
    <property type="project" value="MGI"/>
</dbReference>
<dbReference type="GO" id="GO:0070371">
    <property type="term" value="P:ERK1 and ERK2 cascade"/>
    <property type="evidence" value="ECO:0000315"/>
    <property type="project" value="MGI"/>
</dbReference>
<dbReference type="GO" id="GO:0030097">
    <property type="term" value="P:hemopoiesis"/>
    <property type="evidence" value="ECO:0000315"/>
    <property type="project" value="MGI"/>
</dbReference>
<dbReference type="GO" id="GO:0001701">
    <property type="term" value="P:in utero embryonic development"/>
    <property type="evidence" value="ECO:0000315"/>
    <property type="project" value="MGI"/>
</dbReference>
<dbReference type="GO" id="GO:0035556">
    <property type="term" value="P:intracellular signal transduction"/>
    <property type="evidence" value="ECO:0000250"/>
    <property type="project" value="UniProtKB"/>
</dbReference>
<dbReference type="GO" id="GO:0097193">
    <property type="term" value="P:intrinsic apoptotic signaling pathway"/>
    <property type="evidence" value="ECO:0000315"/>
    <property type="project" value="MGI"/>
</dbReference>
<dbReference type="GO" id="GO:0032418">
    <property type="term" value="P:lysosome localization"/>
    <property type="evidence" value="ECO:0000250"/>
    <property type="project" value="UniProtKB"/>
</dbReference>
<dbReference type="GO" id="GO:1903444">
    <property type="term" value="P:negative regulation of brown fat cell differentiation"/>
    <property type="evidence" value="ECO:0000315"/>
    <property type="project" value="UniProtKB"/>
</dbReference>
<dbReference type="GO" id="GO:0008285">
    <property type="term" value="P:negative regulation of cell population proliferation"/>
    <property type="evidence" value="ECO:0000316"/>
    <property type="project" value="MGI"/>
</dbReference>
<dbReference type="GO" id="GO:1901723">
    <property type="term" value="P:negative regulation of cell proliferation involved in kidney development"/>
    <property type="evidence" value="ECO:0000315"/>
    <property type="project" value="MGI"/>
</dbReference>
<dbReference type="GO" id="GO:0120163">
    <property type="term" value="P:negative regulation of cold-induced thermogenesis"/>
    <property type="evidence" value="ECO:0000315"/>
    <property type="project" value="YuBioLab"/>
</dbReference>
<dbReference type="GO" id="GO:0045892">
    <property type="term" value="P:negative regulation of DNA-templated transcription"/>
    <property type="evidence" value="ECO:0000315"/>
    <property type="project" value="UniProtKB"/>
</dbReference>
<dbReference type="GO" id="GO:0050680">
    <property type="term" value="P:negative regulation of epithelial cell proliferation"/>
    <property type="evidence" value="ECO:0000315"/>
    <property type="project" value="MGI"/>
</dbReference>
<dbReference type="GO" id="GO:0070373">
    <property type="term" value="P:negative regulation of ERK1 and ERK2 cascade"/>
    <property type="evidence" value="ECO:0000315"/>
    <property type="project" value="MGI"/>
</dbReference>
<dbReference type="GO" id="GO:0045820">
    <property type="term" value="P:negative regulation of glycolytic process"/>
    <property type="evidence" value="ECO:0007669"/>
    <property type="project" value="Ensembl"/>
</dbReference>
<dbReference type="GO" id="GO:1905672">
    <property type="term" value="P:negative regulation of lysosome organization"/>
    <property type="evidence" value="ECO:0007669"/>
    <property type="project" value="Ensembl"/>
</dbReference>
<dbReference type="GO" id="GO:0051898">
    <property type="term" value="P:negative regulation of phosphatidylinositol 3-kinase/protein kinase B signal transduction"/>
    <property type="evidence" value="ECO:0000315"/>
    <property type="project" value="MGI"/>
</dbReference>
<dbReference type="GO" id="GO:1901874">
    <property type="term" value="P:negative regulation of post-translational protein modification"/>
    <property type="evidence" value="ECO:0000315"/>
    <property type="project" value="UniProtKB"/>
</dbReference>
<dbReference type="GO" id="GO:0035024">
    <property type="term" value="P:negative regulation of Rho protein signal transduction"/>
    <property type="evidence" value="ECO:0000250"/>
    <property type="project" value="UniProtKB"/>
</dbReference>
<dbReference type="GO" id="GO:0032007">
    <property type="term" value="P:negative regulation of TOR signaling"/>
    <property type="evidence" value="ECO:0000315"/>
    <property type="project" value="MGI"/>
</dbReference>
<dbReference type="GO" id="GO:0000122">
    <property type="term" value="P:negative regulation of transcription by RNA polymerase II"/>
    <property type="evidence" value="ECO:0000315"/>
    <property type="project" value="UniProtKB"/>
</dbReference>
<dbReference type="GO" id="GO:0043491">
    <property type="term" value="P:phosphatidylinositol 3-kinase/protein kinase B signal transduction"/>
    <property type="evidence" value="ECO:0000315"/>
    <property type="project" value="MGI"/>
</dbReference>
<dbReference type="GO" id="GO:0010508">
    <property type="term" value="P:positive regulation of autophagy"/>
    <property type="evidence" value="ECO:0000250"/>
    <property type="project" value="UniProtKB"/>
</dbReference>
<dbReference type="GO" id="GO:2001244">
    <property type="term" value="P:positive regulation of intrinsic apoptotic signaling pathway"/>
    <property type="evidence" value="ECO:0000315"/>
    <property type="project" value="MGI"/>
</dbReference>
<dbReference type="GO" id="GO:0032008">
    <property type="term" value="P:positive regulation of TOR signaling"/>
    <property type="evidence" value="ECO:0000315"/>
    <property type="project" value="MGI"/>
</dbReference>
<dbReference type="GO" id="GO:1904263">
    <property type="term" value="P:positive regulation of TORC1 signaling"/>
    <property type="evidence" value="ECO:0000250"/>
    <property type="project" value="UniProtKB"/>
</dbReference>
<dbReference type="GO" id="GO:0030511">
    <property type="term" value="P:positive regulation of transforming growth factor beta receptor signaling pathway"/>
    <property type="evidence" value="ECO:0000315"/>
    <property type="project" value="MGI"/>
</dbReference>
<dbReference type="GO" id="GO:2000973">
    <property type="term" value="P:regulation of pro-B cell differentiation"/>
    <property type="evidence" value="ECO:0000315"/>
    <property type="project" value="MGI"/>
</dbReference>
<dbReference type="GO" id="GO:0046578">
    <property type="term" value="P:regulation of Ras protein signal transduction"/>
    <property type="evidence" value="ECO:0000250"/>
    <property type="project" value="UniProtKB"/>
</dbReference>
<dbReference type="GO" id="GO:0032006">
    <property type="term" value="P:regulation of TOR signaling"/>
    <property type="evidence" value="ECO:0000315"/>
    <property type="project" value="MGI"/>
</dbReference>
<dbReference type="GO" id="GO:0031929">
    <property type="term" value="P:TOR signaling"/>
    <property type="evidence" value="ECO:0000315"/>
    <property type="project" value="MGI"/>
</dbReference>
<dbReference type="GO" id="GO:0007179">
    <property type="term" value="P:transforming growth factor beta receptor signaling pathway"/>
    <property type="evidence" value="ECO:0000315"/>
    <property type="project" value="MGI"/>
</dbReference>
<dbReference type="FunFam" id="1.10.10.1730:FF:000001">
    <property type="entry name" value="Folliculin"/>
    <property type="match status" value="1"/>
</dbReference>
<dbReference type="FunFam" id="3.40.50.12430:FF:000001">
    <property type="entry name" value="Folliculin"/>
    <property type="match status" value="1"/>
</dbReference>
<dbReference type="Gene3D" id="3.40.50.12430">
    <property type="match status" value="1"/>
</dbReference>
<dbReference type="Gene3D" id="1.10.10.1730">
    <property type="entry name" value="Folliculin"/>
    <property type="match status" value="1"/>
</dbReference>
<dbReference type="InterPro" id="IPR037521">
    <property type="entry name" value="FLCN/SMCR8_DENN"/>
</dbReference>
<dbReference type="InterPro" id="IPR044886">
    <property type="entry name" value="FLCN_DENN_C_sf"/>
</dbReference>
<dbReference type="InterPro" id="IPR021713">
    <property type="entry name" value="Folliculin"/>
</dbReference>
<dbReference type="InterPro" id="IPR037520">
    <property type="entry name" value="Folliculin/SMCR8_longin"/>
</dbReference>
<dbReference type="InterPro" id="IPR032035">
    <property type="entry name" value="Folliculin_DENN"/>
</dbReference>
<dbReference type="PANTHER" id="PTHR31441:SF2">
    <property type="entry name" value="FOLLICULIN"/>
    <property type="match status" value="1"/>
</dbReference>
<dbReference type="PANTHER" id="PTHR31441">
    <property type="entry name" value="FOLLICULIN FAMILY MEMBER"/>
    <property type="match status" value="1"/>
</dbReference>
<dbReference type="Pfam" id="PF11704">
    <property type="entry name" value="Folliculin"/>
    <property type="match status" value="1"/>
</dbReference>
<dbReference type="Pfam" id="PF16692">
    <property type="entry name" value="Folliculin_C"/>
    <property type="match status" value="1"/>
</dbReference>
<dbReference type="PROSITE" id="PS51834">
    <property type="entry name" value="DENN_FLCN_SMCR8"/>
    <property type="match status" value="1"/>
</dbReference>
<feature type="chain" id="PRO_0000223941" description="Folliculin">
    <location>
        <begin position="1"/>
        <end position="579"/>
    </location>
</feature>
<feature type="domain" description="uDENN FLCN/SMCR8-type" evidence="3">
    <location>
        <begin position="86"/>
        <end position="242"/>
    </location>
</feature>
<feature type="domain" description="cDENN FLCN/SMCR8-type" evidence="3">
    <location>
        <begin position="339"/>
        <end position="491"/>
    </location>
</feature>
<feature type="domain" description="dDENN FLCN/SMCR8-type" evidence="3">
    <location>
        <begin position="493"/>
        <end position="558"/>
    </location>
</feature>
<feature type="region of interest" description="Disordered" evidence="4">
    <location>
        <begin position="31"/>
        <end position="82"/>
    </location>
</feature>
<feature type="region of interest" description="Disordered" evidence="4">
    <location>
        <begin position="294"/>
        <end position="323"/>
    </location>
</feature>
<feature type="coiled-coil region" evidence="2">
    <location>
        <begin position="287"/>
        <end position="310"/>
    </location>
</feature>
<feature type="compositionally biased region" description="Low complexity" evidence="4">
    <location>
        <begin position="63"/>
        <end position="76"/>
    </location>
</feature>
<feature type="compositionally biased region" description="Acidic residues" evidence="4">
    <location>
        <begin position="294"/>
        <end position="308"/>
    </location>
</feature>
<feature type="site" description="Essential for GTPase activation (GAP) activity" evidence="1">
    <location>
        <position position="164"/>
    </location>
</feature>
<feature type="modified residue" description="Phosphoserine" evidence="18 19">
    <location>
        <position position="62"/>
    </location>
</feature>
<feature type="modified residue" description="Phosphoserine" evidence="18 19">
    <location>
        <position position="73"/>
    </location>
</feature>
<feature type="modified residue" description="Phosphoserine" evidence="1">
    <location>
        <position position="302"/>
    </location>
</feature>
<feature type="modified residue" description="Phosphoserine" evidence="1">
    <location>
        <position position="406"/>
    </location>
</feature>
<feature type="modified residue" description="Phosphoserine" evidence="1">
    <location>
        <position position="537"/>
    </location>
</feature>
<feature type="modified residue" description="Phosphoserine" evidence="1">
    <location>
        <position position="542"/>
    </location>
</feature>
<feature type="modified residue" description="Phosphoserine" evidence="1">
    <location>
        <position position="571"/>
    </location>
</feature>
<feature type="sequence conflict" description="In Ref. 1; BAE28418." evidence="16" ref="1">
    <original>L</original>
    <variation>M</variation>
    <location>
        <position position="29"/>
    </location>
</feature>
<feature type="sequence conflict" description="In Ref. 1; BAE28418." evidence="16" ref="1">
    <original>S</original>
    <variation>Y</variation>
    <location>
        <position position="240"/>
    </location>
</feature>
<feature type="sequence conflict" description="In Ref. 1; BAE32332." evidence="16" ref="1">
    <original>E</original>
    <variation>G</variation>
    <location>
        <position position="328"/>
    </location>
</feature>
<feature type="sequence conflict" description="In Ref. 1; BAC30240." evidence="16" ref="1">
    <original>K</original>
    <variation>R</variation>
    <location>
        <position position="377"/>
    </location>
</feature>
<organism>
    <name type="scientific">Mus musculus</name>
    <name type="common">Mouse</name>
    <dbReference type="NCBI Taxonomy" id="10090"/>
    <lineage>
        <taxon>Eukaryota</taxon>
        <taxon>Metazoa</taxon>
        <taxon>Chordata</taxon>
        <taxon>Craniata</taxon>
        <taxon>Vertebrata</taxon>
        <taxon>Euteleostomi</taxon>
        <taxon>Mammalia</taxon>
        <taxon>Eutheria</taxon>
        <taxon>Euarchontoglires</taxon>
        <taxon>Glires</taxon>
        <taxon>Rodentia</taxon>
        <taxon>Myomorpha</taxon>
        <taxon>Muroidea</taxon>
        <taxon>Muridae</taxon>
        <taxon>Murinae</taxon>
        <taxon>Mus</taxon>
        <taxon>Mus</taxon>
    </lineage>
</organism>
<proteinExistence type="evidence at protein level"/>
<accession>Q8QZS3</accession>
<accession>Q3U4U8</accession>
<accession>Q3UFZ1</accession>
<accession>Q5SWZ2</accession>
<accession>Q5SX01</accession>
<accession>Q5SX02</accession>
<accession>Q8CAC0</accession>
<gene>
    <name evidence="14 17" type="primary">Flcn</name>
    <name evidence="15" type="synonym">Bhd</name>
</gene>
<evidence type="ECO:0000250" key="1">
    <source>
        <dbReference type="UniProtKB" id="Q8NFG4"/>
    </source>
</evidence>
<evidence type="ECO:0000255" key="2"/>
<evidence type="ECO:0000255" key="3">
    <source>
        <dbReference type="PROSITE-ProRule" id="PRU01178"/>
    </source>
</evidence>
<evidence type="ECO:0000256" key="4">
    <source>
        <dbReference type="SAM" id="MobiDB-lite"/>
    </source>
</evidence>
<evidence type="ECO:0000269" key="5">
    <source>
    </source>
</evidence>
<evidence type="ECO:0000269" key="6">
    <source>
    </source>
</evidence>
<evidence type="ECO:0000269" key="7">
    <source>
    </source>
</evidence>
<evidence type="ECO:0000269" key="8">
    <source>
    </source>
</evidence>
<evidence type="ECO:0000269" key="9">
    <source>
    </source>
</evidence>
<evidence type="ECO:0000269" key="10">
    <source>
    </source>
</evidence>
<evidence type="ECO:0000269" key="11">
    <source>
    </source>
</evidence>
<evidence type="ECO:0000269" key="12">
    <source>
    </source>
</evidence>
<evidence type="ECO:0000269" key="13">
    <source>
    </source>
</evidence>
<evidence type="ECO:0000303" key="14">
    <source>
    </source>
</evidence>
<evidence type="ECO:0000303" key="15">
    <source>
    </source>
</evidence>
<evidence type="ECO:0000305" key="16"/>
<evidence type="ECO:0000312" key="17">
    <source>
        <dbReference type="MGI" id="MGI:2442184"/>
    </source>
</evidence>
<evidence type="ECO:0007744" key="18">
    <source>
    </source>
</evidence>
<evidence type="ECO:0007744" key="19">
    <source>
    </source>
</evidence>
<keyword id="KW-0966">Cell projection</keyword>
<keyword id="KW-0175">Coiled coil</keyword>
<keyword id="KW-0963">Cytoplasm</keyword>
<keyword id="KW-0206">Cytoskeleton</keyword>
<keyword id="KW-0343">GTPase activation</keyword>
<keyword id="KW-0458">Lysosome</keyword>
<keyword id="KW-0472">Membrane</keyword>
<keyword id="KW-0539">Nucleus</keyword>
<keyword id="KW-0597">Phosphoprotein</keyword>
<keyword id="KW-1185">Reference proteome</keyword>
<keyword id="KW-0043">Tumor suppressor</keyword>
<name>FLCN_MOUSE</name>
<reference key="1">
    <citation type="journal article" date="2005" name="Science">
        <title>The transcriptional landscape of the mammalian genome.</title>
        <authorList>
            <person name="Carninci P."/>
            <person name="Kasukawa T."/>
            <person name="Katayama S."/>
            <person name="Gough J."/>
            <person name="Frith M.C."/>
            <person name="Maeda N."/>
            <person name="Oyama R."/>
            <person name="Ravasi T."/>
            <person name="Lenhard B."/>
            <person name="Wells C."/>
            <person name="Kodzius R."/>
            <person name="Shimokawa K."/>
            <person name="Bajic V.B."/>
            <person name="Brenner S.E."/>
            <person name="Batalov S."/>
            <person name="Forrest A.R."/>
            <person name="Zavolan M."/>
            <person name="Davis M.J."/>
            <person name="Wilming L.G."/>
            <person name="Aidinis V."/>
            <person name="Allen J.E."/>
            <person name="Ambesi-Impiombato A."/>
            <person name="Apweiler R."/>
            <person name="Aturaliya R.N."/>
            <person name="Bailey T.L."/>
            <person name="Bansal M."/>
            <person name="Baxter L."/>
            <person name="Beisel K.W."/>
            <person name="Bersano T."/>
            <person name="Bono H."/>
            <person name="Chalk A.M."/>
            <person name="Chiu K.P."/>
            <person name="Choudhary V."/>
            <person name="Christoffels A."/>
            <person name="Clutterbuck D.R."/>
            <person name="Crowe M.L."/>
            <person name="Dalla E."/>
            <person name="Dalrymple B.P."/>
            <person name="de Bono B."/>
            <person name="Della Gatta G."/>
            <person name="di Bernardo D."/>
            <person name="Down T."/>
            <person name="Engstrom P."/>
            <person name="Fagiolini M."/>
            <person name="Faulkner G."/>
            <person name="Fletcher C.F."/>
            <person name="Fukushima T."/>
            <person name="Furuno M."/>
            <person name="Futaki S."/>
            <person name="Gariboldi M."/>
            <person name="Georgii-Hemming P."/>
            <person name="Gingeras T.R."/>
            <person name="Gojobori T."/>
            <person name="Green R.E."/>
            <person name="Gustincich S."/>
            <person name="Harbers M."/>
            <person name="Hayashi Y."/>
            <person name="Hensch T.K."/>
            <person name="Hirokawa N."/>
            <person name="Hill D."/>
            <person name="Huminiecki L."/>
            <person name="Iacono M."/>
            <person name="Ikeo K."/>
            <person name="Iwama A."/>
            <person name="Ishikawa T."/>
            <person name="Jakt M."/>
            <person name="Kanapin A."/>
            <person name="Katoh M."/>
            <person name="Kawasawa Y."/>
            <person name="Kelso J."/>
            <person name="Kitamura H."/>
            <person name="Kitano H."/>
            <person name="Kollias G."/>
            <person name="Krishnan S.P."/>
            <person name="Kruger A."/>
            <person name="Kummerfeld S.K."/>
            <person name="Kurochkin I.V."/>
            <person name="Lareau L.F."/>
            <person name="Lazarevic D."/>
            <person name="Lipovich L."/>
            <person name="Liu J."/>
            <person name="Liuni S."/>
            <person name="McWilliam S."/>
            <person name="Madan Babu M."/>
            <person name="Madera M."/>
            <person name="Marchionni L."/>
            <person name="Matsuda H."/>
            <person name="Matsuzawa S."/>
            <person name="Miki H."/>
            <person name="Mignone F."/>
            <person name="Miyake S."/>
            <person name="Morris K."/>
            <person name="Mottagui-Tabar S."/>
            <person name="Mulder N."/>
            <person name="Nakano N."/>
            <person name="Nakauchi H."/>
            <person name="Ng P."/>
            <person name="Nilsson R."/>
            <person name="Nishiguchi S."/>
            <person name="Nishikawa S."/>
            <person name="Nori F."/>
            <person name="Ohara O."/>
            <person name="Okazaki Y."/>
            <person name="Orlando V."/>
            <person name="Pang K.C."/>
            <person name="Pavan W.J."/>
            <person name="Pavesi G."/>
            <person name="Pesole G."/>
            <person name="Petrovsky N."/>
            <person name="Piazza S."/>
            <person name="Reed J."/>
            <person name="Reid J.F."/>
            <person name="Ring B.Z."/>
            <person name="Ringwald M."/>
            <person name="Rost B."/>
            <person name="Ruan Y."/>
            <person name="Salzberg S.L."/>
            <person name="Sandelin A."/>
            <person name="Schneider C."/>
            <person name="Schoenbach C."/>
            <person name="Sekiguchi K."/>
            <person name="Semple C.A."/>
            <person name="Seno S."/>
            <person name="Sessa L."/>
            <person name="Sheng Y."/>
            <person name="Shibata Y."/>
            <person name="Shimada H."/>
            <person name="Shimada K."/>
            <person name="Silva D."/>
            <person name="Sinclair B."/>
            <person name="Sperling S."/>
            <person name="Stupka E."/>
            <person name="Sugiura K."/>
            <person name="Sultana R."/>
            <person name="Takenaka Y."/>
            <person name="Taki K."/>
            <person name="Tammoja K."/>
            <person name="Tan S.L."/>
            <person name="Tang S."/>
            <person name="Taylor M.S."/>
            <person name="Tegner J."/>
            <person name="Teichmann S.A."/>
            <person name="Ueda H.R."/>
            <person name="van Nimwegen E."/>
            <person name="Verardo R."/>
            <person name="Wei C.L."/>
            <person name="Yagi K."/>
            <person name="Yamanishi H."/>
            <person name="Zabarovsky E."/>
            <person name="Zhu S."/>
            <person name="Zimmer A."/>
            <person name="Hide W."/>
            <person name="Bult C."/>
            <person name="Grimmond S.M."/>
            <person name="Teasdale R.D."/>
            <person name="Liu E.T."/>
            <person name="Brusic V."/>
            <person name="Quackenbush J."/>
            <person name="Wahlestedt C."/>
            <person name="Mattick J.S."/>
            <person name="Hume D.A."/>
            <person name="Kai C."/>
            <person name="Sasaki D."/>
            <person name="Tomaru Y."/>
            <person name="Fukuda S."/>
            <person name="Kanamori-Katayama M."/>
            <person name="Suzuki M."/>
            <person name="Aoki J."/>
            <person name="Arakawa T."/>
            <person name="Iida J."/>
            <person name="Imamura K."/>
            <person name="Itoh M."/>
            <person name="Kato T."/>
            <person name="Kawaji H."/>
            <person name="Kawagashira N."/>
            <person name="Kawashima T."/>
            <person name="Kojima M."/>
            <person name="Kondo S."/>
            <person name="Konno H."/>
            <person name="Nakano K."/>
            <person name="Ninomiya N."/>
            <person name="Nishio T."/>
            <person name="Okada M."/>
            <person name="Plessy C."/>
            <person name="Shibata K."/>
            <person name="Shiraki T."/>
            <person name="Suzuki S."/>
            <person name="Tagami M."/>
            <person name="Waki K."/>
            <person name="Watahiki A."/>
            <person name="Okamura-Oho Y."/>
            <person name="Suzuki H."/>
            <person name="Kawai J."/>
            <person name="Hayashizaki Y."/>
        </authorList>
    </citation>
    <scope>NUCLEOTIDE SEQUENCE [LARGE SCALE MRNA]</scope>
    <source>
        <strain>C57BL/6J</strain>
        <tissue>Adipose tissue</tissue>
        <tissue>Egg</tissue>
        <tissue>Hypothalamus</tissue>
        <tissue>Thymus</tissue>
    </source>
</reference>
<reference key="2">
    <citation type="journal article" date="2009" name="PLoS Biol.">
        <title>Lineage-specific biology revealed by a finished genome assembly of the mouse.</title>
        <authorList>
            <person name="Church D.M."/>
            <person name="Goodstadt L."/>
            <person name="Hillier L.W."/>
            <person name="Zody M.C."/>
            <person name="Goldstein S."/>
            <person name="She X."/>
            <person name="Bult C.J."/>
            <person name="Agarwala R."/>
            <person name="Cherry J.L."/>
            <person name="DiCuccio M."/>
            <person name="Hlavina W."/>
            <person name="Kapustin Y."/>
            <person name="Meric P."/>
            <person name="Maglott D."/>
            <person name="Birtle Z."/>
            <person name="Marques A.C."/>
            <person name="Graves T."/>
            <person name="Zhou S."/>
            <person name="Teague B."/>
            <person name="Potamousis K."/>
            <person name="Churas C."/>
            <person name="Place M."/>
            <person name="Herschleb J."/>
            <person name="Runnheim R."/>
            <person name="Forrest D."/>
            <person name="Amos-Landgraf J."/>
            <person name="Schwartz D.C."/>
            <person name="Cheng Z."/>
            <person name="Lindblad-Toh K."/>
            <person name="Eichler E.E."/>
            <person name="Ponting C.P."/>
        </authorList>
    </citation>
    <scope>NUCLEOTIDE SEQUENCE [LARGE SCALE GENOMIC DNA]</scope>
    <source>
        <strain>C57BL/6J</strain>
    </source>
</reference>
<reference key="3">
    <citation type="journal article" date="2004" name="Genome Res.">
        <title>The status, quality, and expansion of the NIH full-length cDNA project: the Mammalian Gene Collection (MGC).</title>
        <authorList>
            <consortium name="The MGC Project Team"/>
        </authorList>
    </citation>
    <scope>NUCLEOTIDE SEQUENCE [LARGE SCALE MRNA]</scope>
    <source>
        <strain>FVB/N</strain>
        <tissue>Liver</tissue>
    </source>
</reference>
<reference key="4">
    <citation type="journal article" date="2009" name="Immunity">
        <title>The phagosomal proteome in interferon-gamma-activated macrophages.</title>
        <authorList>
            <person name="Trost M."/>
            <person name="English L."/>
            <person name="Lemieux S."/>
            <person name="Courcelles M."/>
            <person name="Desjardins M."/>
            <person name="Thibault P."/>
        </authorList>
    </citation>
    <scope>PHOSPHORYLATION [LARGE SCALE ANALYSIS] AT SER-62 AND SER-73</scope>
    <scope>IDENTIFICATION BY MASS SPECTROMETRY [LARGE SCALE ANALYSIS]</scope>
</reference>
<reference key="5">
    <citation type="journal article" date="2010" name="Cell">
        <title>A tissue-specific atlas of mouse protein phosphorylation and expression.</title>
        <authorList>
            <person name="Huttlin E.L."/>
            <person name="Jedrychowski M.P."/>
            <person name="Elias J.E."/>
            <person name="Goswami T."/>
            <person name="Rad R."/>
            <person name="Beausoleil S.A."/>
            <person name="Villen J."/>
            <person name="Haas W."/>
            <person name="Sowa M.E."/>
            <person name="Gygi S.P."/>
        </authorList>
    </citation>
    <scope>PHOSPHORYLATION [LARGE SCALE ANALYSIS] AT SER-62 AND SER-73</scope>
    <scope>IDENTIFICATION BY MASS SPECTROMETRY [LARGE SCALE ANALYSIS]</scope>
    <source>
        <tissue>Brain</tissue>
        <tissue>Kidney</tissue>
        <tissue>Liver</tissue>
        <tissue>Pancreas</tissue>
        <tissue>Spleen</tissue>
        <tissue>Testis</tissue>
    </source>
</reference>
<reference key="6">
    <citation type="journal article" date="2008" name="J. Natl. Cancer Inst.">
        <title>Kidney-targeted Birt-Hogg-Dube gene inactivation in a mouse model: Erk1/2 and Akt-mTOR activation, cell hyperproliferation, and polycystic kidneys.</title>
        <authorList>
            <person name="Baba M."/>
            <person name="Furihata M."/>
            <person name="Hong S.B."/>
            <person name="Tessarollo L."/>
            <person name="Haines D.C."/>
            <person name="Southon E."/>
            <person name="Patel V."/>
            <person name="Igarashi P."/>
            <person name="Alvord W.G."/>
            <person name="Leighty R."/>
            <person name="Yao M."/>
            <person name="Bernardo M."/>
            <person name="Ileva L."/>
            <person name="Choyke P."/>
            <person name="Warren M.B."/>
            <person name="Zbar B."/>
            <person name="Linehan W.M."/>
            <person name="Schmidt L.S."/>
        </authorList>
    </citation>
    <scope>DISRUPTION PHENOTYPE</scope>
</reference>
<reference key="7">
    <citation type="journal article" date="2008" name="PLoS ONE">
        <title>Deficiency of FLCN in mouse kidney led to development of polycystic kidneys and renal neoplasia.</title>
        <authorList>
            <person name="Chen J."/>
            <person name="Futami K."/>
            <person name="Petillo D."/>
            <person name="Peng J."/>
            <person name="Wang P."/>
            <person name="Knol J."/>
            <person name="Li Y."/>
            <person name="Khoo S.K."/>
            <person name="Huang D."/>
            <person name="Qian C.N."/>
            <person name="Zhao P."/>
            <person name="Dykema K."/>
            <person name="Dykyma K."/>
            <person name="Zhang R."/>
            <person name="Cao B."/>
            <person name="Yang X.J."/>
            <person name="Furge K."/>
            <person name="Williams B.O."/>
            <person name="Teh B.T."/>
        </authorList>
    </citation>
    <scope>DISRUPTION PHENOTYPE</scope>
</reference>
<reference key="8">
    <citation type="journal article" date="2009" name="Proc. Natl. Acad. Sci. U.S.A.">
        <title>Homozygous loss of BHD causes early embryonic lethality and kidney tumor development with activation of mTORC1 and mTORC2.</title>
        <authorList>
            <person name="Hasumi Y."/>
            <person name="Baba M."/>
            <person name="Ajima R."/>
            <person name="Hasumi H."/>
            <person name="Valera V.A."/>
            <person name="Klein M.E."/>
            <person name="Haines D.C."/>
            <person name="Merino M.J."/>
            <person name="Hong S.B."/>
            <person name="Yamaguchi T.P."/>
            <person name="Schmidt L.S."/>
            <person name="Linehan W.M."/>
        </authorList>
    </citation>
    <scope>DISRUPTION PHENOTYPE</scope>
    <scope>TISSUE SPECIFICITY</scope>
    <scope>DEVELOPMENTAL STAGE</scope>
</reference>
<reference key="9">
    <citation type="journal article" date="2013" name="Cell">
        <title>Exit from pluripotency is gated by intracellular redistribution of the bHLH transcription factor Tfe3.</title>
        <authorList>
            <person name="Betschinger J."/>
            <person name="Nichols J."/>
            <person name="Dietmann S."/>
            <person name="Corrin P.D."/>
            <person name="Paddison P.J."/>
            <person name="Smith A."/>
        </authorList>
    </citation>
    <scope>FUNCTION</scope>
</reference>
<reference key="10">
    <citation type="journal article" date="2014" name="Hum. Mol. Genet.">
        <title>Folliculin (Flcn) inactivation leads to murine cardiac hypertrophy through mTORC1 deregulation.</title>
        <authorList>
            <person name="Hasumi Y."/>
            <person name="Baba M."/>
            <person name="Hasumi H."/>
            <person name="Huang Y."/>
            <person name="Lang M."/>
            <person name="Reindorf R."/>
            <person name="Oh H.B."/>
            <person name="Sciarretta S."/>
            <person name="Nagashima K."/>
            <person name="Haines D.C."/>
            <person name="Schneider M.D."/>
            <person name="Adelstein R.S."/>
            <person name="Schmidt L.S."/>
            <person name="Sadoshima J."/>
            <person name="Marston Linehan W."/>
        </authorList>
    </citation>
    <scope>DISRUPTION PHENOTYPE</scope>
</reference>
<reference key="11">
    <citation type="journal article" date="2016" name="Genes Dev.">
        <title>The tumor suppressor FLCN mediates an alternate mTOR pathway to regulate browning of adipose tissue.</title>
        <authorList>
            <person name="Wada S."/>
            <person name="Neinast M."/>
            <person name="Jang C."/>
            <person name="Ibrahim Y.H."/>
            <person name="Lee G."/>
            <person name="Babu A."/>
            <person name="Li J."/>
            <person name="Hoshino A."/>
            <person name="Rowe G.C."/>
            <person name="Rhee J."/>
            <person name="Martina J.A."/>
            <person name="Puertollano R."/>
            <person name="Blenis J."/>
            <person name="Morley M."/>
            <person name="Baur J.A."/>
            <person name="Seale P."/>
            <person name="Arany Z."/>
        </authorList>
    </citation>
    <scope>FUNCTION</scope>
    <scope>TISSUE SPECIFICITY</scope>
    <scope>DISRUPTION PHENOTYPE</scope>
</reference>
<reference key="12">
    <citation type="journal article" date="2019" name="Hum. Mol. Genet.">
        <title>Loss of FLCN inhibits canonical WNT signaling via TFE3.</title>
        <authorList>
            <person name="Kennedy J.C."/>
            <person name="Khabibullin D."/>
            <person name="Hougard T."/>
            <person name="Nijmeh J."/>
            <person name="Shi W."/>
            <person name="Henske E.P."/>
        </authorList>
    </citation>
    <scope>FUNCTION</scope>
</reference>
<reference key="13">
    <citation type="journal article" date="2019" name="Cell Stem Cell">
        <title>Lysosomal signaling licenses embryonic stem cell differentiation via inactivation of Tfe3.</title>
        <authorList>
            <person name="Villegas F."/>
            <person name="Lehalle D."/>
            <person name="Mayer D."/>
            <person name="Rittirsch M."/>
            <person name="Stadler M.B."/>
            <person name="Zinner M."/>
            <person name="Olivieri D."/>
            <person name="Vabres P."/>
            <person name="Duplomb-Jego L."/>
            <person name="De Bont E.S.J.M."/>
            <person name="Duffourd Y."/>
            <person name="Duijkers F."/>
            <person name="Avila M."/>
            <person name="Genevieve D."/>
            <person name="Houcinat N."/>
            <person name="Jouan T."/>
            <person name="Kuentz P."/>
            <person name="Lichtenbelt K.D."/>
            <person name="Thauvin-Robinet C."/>
            <person name="St-Onge J."/>
            <person name="Thevenon J."/>
            <person name="van Gassen K.L.I."/>
            <person name="van Haelst M."/>
            <person name="van Koningsbruggen S."/>
            <person name="Hess D."/>
            <person name="Smallwood S.A."/>
            <person name="Riviere J.B."/>
            <person name="Faivre L."/>
            <person name="Betschinger J."/>
        </authorList>
    </citation>
    <scope>FUNCTION</scope>
</reference>
<reference key="14">
    <citation type="journal article" date="2020" name="Nature">
        <title>A substrate-specific mTORC1 pathway underlies Birt-Hogg-Dube syndrome.</title>
        <authorList>
            <person name="Napolitano G."/>
            <person name="Di Malta C."/>
            <person name="Esposito A."/>
            <person name="de Araujo M.E.G."/>
            <person name="Pece S."/>
            <person name="Bertalot G."/>
            <person name="Matarese M."/>
            <person name="Benedetti V."/>
            <person name="Zampelli A."/>
            <person name="Stasyk T."/>
            <person name="Siciliano D."/>
            <person name="Venuta A."/>
            <person name="Cesana M."/>
            <person name="Vilardo C."/>
            <person name="Nusco E."/>
            <person name="Monfregola J."/>
            <person name="Calcagni A."/>
            <person name="Di Fiore P.P."/>
            <person name="Huber L.A."/>
            <person name="Ballabio A."/>
        </authorList>
    </citation>
    <scope>FUNCTION</scope>
    <scope>DISRUPTION PHENOTYPE</scope>
</reference>
<comment type="function">
    <text evidence="1 8 10 11 12 13">Multi-functional protein, involved in both the cellular response to amino acid availability and in the regulation of glycolysis (PubMed:23582324, PubMed:27913603, PubMed:32612235). GTPase-activating protein that plays a key role in the cellular response to amino acid availability through regulation of the non-canonical mTORC1 signaling cascade controlling the MiT/TFE factors TFEB and TFE3 (PubMed:23582324, PubMed:27913603, PubMed:32612235). Activates mTORC1 by acting as a GTPase-activating protein: specifically stimulates GTP hydrolysis by RagC/RRAGC or RagD/RRAGD, promoting the conversion to the GDP-bound state of RagC/RRAGC or RagD/RRAGD, and thereby activating the kinase activity of mTORC1 (By similarity). The GTPase-activating activity is inhibited during starvation and activated in presence of nutrients (By similarity). Acts as a key component for non-canonical mTORC1-dependent control of the MiT/TFE factors TFEB and TFE3, while it is not involved in mTORC1-dependent phosphorylation of canonical RPS6KB1/S6K1 and EIF4EBP1/4E-BP1 (PubMed:27913603, PubMed:32612235). In low-amino acid conditions, the lysosomal folliculin complex (LFC) is formed on the membrane of lysosomes, which inhibits the GTPase-activating activity of FLCN, inactivates mTORC1 and maximizes nuclear translocation of TFEB and TFE3 (By similarity). Upon amino acid restimulation, RagA/RRAGA (or RagB/RRAGB) nucleotide exchange promotes disassembly of the LFC complex and liberates the GTPase-activating activity of FLCN, leading to activation of mTORC1 and subsequent cytoplasmic retention of TFEB and TFE3 (By similarity). Indirectly acts as a positive regulator of Wnt signaling by promoting mTOR-dependent cytoplasmic retention of MiT/TFE factor TFE3 (PubMed:31272105). Required for the exit of hematopoietic stem cell from pluripotency by promoting mTOR-dependent cytoplasmic retention of TFE3, thereby increasing Wnt signaling (By similarity). Involved in the control of embryonic stem cells differentiation; together with LAMTOR1 it is necessary to recruit and activate RagC/RRAGC and RagD/RRAGD at the lysosomes, and to induce exit of embryonic stem cells from pluripotency via non-canonical, mTOR-independent TFE3 inactivation (PubMed:30595499). Acts as an inhibitor of browning of adipose tissue by regulating mTOR-dependent cytoplasmic retention of TFE3 (PubMed:27913603). In response to flow stress, regulates STK11/LKB1 accumulation and mTORC1 activation through primary cilia: may act by recruiting STK11/LKB1 to primary cilia for activation of AMPK resided at basal bodies, causing mTORC1 down-regulation (By similarity). Together with FNIP1 and/or FNIP2, regulates autophagy: following phosphorylation by ULK1, interacts with GABARAP and promotes autophagy (By similarity). Required for starvation-induced perinuclear clustering of lysosomes by promoting association of RILP with its effector RAB34 (By similarity). Regulates glycolysis by binding to lactate dehydrogenase LDHA, acting as an uncompetitive inhibitor (By similarity).</text>
</comment>
<comment type="activity regulation">
    <text evidence="1">GTPase-activating activity is inhibited in the folliculin complex (LFC), which stabilizes the GDP-bound state of RagA/RRAGA (or RagB/RRAGB), because Arg-164 is located far from the RagC/RRAGC or RagD/RRAGD nucleotide pocket (By similarity). Disassembly of the LFC complex upon amino acid restimulation liberates the GTPase-activating activity (By similarity).</text>
</comment>
<comment type="subunit">
    <text evidence="1">Interacts (via C-terminus) with FNIP1 or FNIP2 (via C-terminus). Component of the lysosomal folliculin complex (LFC), composed of FLCN, FNIP1 (or FNIP2), RagA/RRAGA or RagB/RRAGB GDP-bound, RagC/RRAGC or RagD/RRAGD GTP-bound, and Ragulator. Interaction with FNIP1 or FNIP2 mediates indirect interaction with the PRKAA1, PRKAB1 and PRKAG1 subunits of 5'-AMP-activated protein kinase (AMPK). Interacts with HSP90AA1 in the presence of FNIP1. Interacts with HSP70, STUB1, CDC37, AHSA1, CCT2, STIP1, PTGES3 and PPP5C (By similarity). Interacts with GABARAP; interaction takes place in the presence of FNIP1 and/or FNIP2 (By similarity). Interacts with RILP; the interaction is direct and promotes association between RILP and RAB34 (By similarity). Interacts with KIF3A and KIF3B (By similarity). Interacts with lactate dehydrogenase LDHA, but not LDHB; the interaction is direct, may preferentially bind LDHA dimers rather than tetramers, and regulates LDHA activity, acting as an uncompetitive inhibitor.</text>
</comment>
<comment type="interaction">
    <interactant intactId="EBI-6911093">
        <id>Q8QZS3</id>
    </interactant>
    <interactant intactId="EBI-6911068">
        <id>Q68FD7</id>
        <label>Fnip1</label>
    </interactant>
    <organismsDiffer>false</organismsDiffer>
    <experiments>3</experiments>
</comment>
<comment type="subcellular location">
    <subcellularLocation>
        <location evidence="1">Lysosome membrane</location>
    </subcellularLocation>
    <subcellularLocation>
        <location evidence="1">Cytoplasm</location>
        <location evidence="1">Cytosol</location>
    </subcellularLocation>
    <subcellularLocation>
        <location evidence="1">Cell projection</location>
        <location evidence="1">Cilium</location>
    </subcellularLocation>
    <subcellularLocation>
        <location evidence="1">Cytoplasm</location>
        <location evidence="1">Cytoskeleton</location>
        <location evidence="1">Microtubule organizing center</location>
        <location evidence="1">Centrosome</location>
    </subcellularLocation>
    <subcellularLocation>
        <location evidence="1">Cytoplasm</location>
        <location evidence="1">Cytoskeleton</location>
        <location evidence="1">Spindle</location>
    </subcellularLocation>
    <subcellularLocation>
        <location evidence="1">Nucleus</location>
    </subcellularLocation>
    <text evidence="1">Localizes to lysosome membrane in amino acid-depleted conditions and relocalizes to the cytosol upon refeeding. Colocalizes with FNIP1 and FNIP2 in the cytoplasm. Also localizes to motile and non-motile cilia, centrosomes and the mitotic spindle.</text>
</comment>
<comment type="tissue specificity">
    <text evidence="7 10">Highly expressed in adult heart, pancreas, and prostate with moderate expression in adult brain, kidney, liver, adipose tissue and lung.</text>
</comment>
<comment type="developmental stage">
    <text evidence="7">Expressed throughout embryogenesis (PubMed:19850877). At 5.5 dpc, expression is restricted to extraembryonic tissues; by 6.5 dpc, expressed in both embryonic and extraembryonic tissues (PubMed:19850877). Strong expression is observed in certain tissues including neural ectoderm, headfold and limb buds, while it is weakly expressed in the surrounding endoderm and heart (PubMed:19850877).</text>
</comment>
<comment type="PTM">
    <text evidence="1">Phosphorylation by ULK1 modulates the interaction with GABARAP and is required to regulate autophagy.</text>
</comment>
<comment type="disruption phenotype">
    <text evidence="5 6 7 9 10 13">Embryonic lethality at 5.5-6.5 dpc, showing defects in the visceral endoderm (PubMed:18974783, PubMed:19850877). Heterozygous knockout mice appear normal at birth but develop kidney cysts and solid tumors as they age, probably caused by activation of the mTOR pathway (PubMed:19850877). Conditional deletion in kidney leads to development of polycystic kidneys and renal neoplasia, caused by activation of the mTOR pathway (PubMed:18182616, PubMed:18974783, PubMed:32612235). Mice lacking Tfeb and Flcn in the kidney do not show any abnormality in the kidney, suggesting that the kidney phenotype observed in Flcn knockout mice is due to constitutive activation of Tfeb (PubMed:32612235). Conditional deletion in heart causes cardiac hypertrophy with deregulated energy homeostasis leading to dilated cardiomyopathy: defects are caused by mTORC1 up-regulation (PubMed:24908670). Conditional deletion in adipose tissue leads to browning of white adipose tissue (WAT) caused by deregulation of mTORC1 that relieves cytoplasmic retention of Tfe3, leading to direct induction of the Ppargc1b/PGC-1 transcriptional coactivators, drivers of mitochondrial biogenesis and the browning program (PubMed:27913603).</text>
</comment>
<comment type="similarity">
    <text evidence="16">Belongs to the folliculin family.</text>
</comment>
<comment type="sequence caution" evidence="16">
    <conflict type="frameshift">
        <sequence resource="EMBL-CDS" id="BAC30240"/>
    </conflict>
</comment>
<protein>
    <recommendedName>
        <fullName evidence="14">Folliculin</fullName>
    </recommendedName>
    <alternativeName>
        <fullName evidence="15">Birt-Hogg-Dube syndrome protein homolog</fullName>
    </alternativeName>
</protein>
<sequence length="579" mass="64327">MNAIVALCHFCELHGPRTLFCTEVLHAPLPQGAGSGDSPDQVEQAEEEEGGIQMSSRVRAHSPAEGASSESSSPGPKKSDMCEGCRSLAVGHPGYISHDKETSIKYVSHQHPNHPQLFSIVRQACVRSLSCEVCPGREGPIFFGDEQHGFVFSHTFFIKDSLARGFQRWYSIIAIMMDRIYLINSWPFLLGRIRGIISELQAKAFKVFEAEQFGCPQRAQRMNTAFTPFLHQRNGNAARSLTSLTSDDNLWACLHTSFAWLLKACGSRLTEKLLEGAPTEDTLVQMEKLADLEEESESWDNSEAEEEEKAPVTPEGAEGRELTSCPTESSFLSACGSWQPPKLTGFKSLRHMRQVLGAPSFRMLAWHVLMGNQVIWKSRDVNLVHSAFEVLRTMLPVGCVRIIPYSSQYEEAYRCNFLGLSPPVPIPAHVLASEFVVVVEVHTATRSNLHPAGCEDDQSLSKYEFVVTSGSPVAADRVGPTILNKIEAALTNQNLSVDVVDQCLICLKEEWMNKVKVLFKFTKVDSRPKEDTQKLLSVLGASEEDNVKLLKFWMTGLSKTYKSHLMSTVRSPTATESRS</sequence>